<feature type="chain" id="PRO_0000240221" description="Nuclear distribution protein nudE-like 1">
    <location>
        <begin position="1"/>
        <end position="346"/>
    </location>
</feature>
<feature type="region of interest" description="Disordered" evidence="4">
    <location>
        <begin position="184"/>
        <end position="205"/>
    </location>
</feature>
<feature type="region of interest" description="Disordered" evidence="4">
    <location>
        <begin position="325"/>
        <end position="346"/>
    </location>
</feature>
<feature type="coiled-coil region" evidence="3">
    <location>
        <begin position="13"/>
        <end position="190"/>
    </location>
</feature>
<feature type="compositionally biased region" description="Polar residues" evidence="4">
    <location>
        <begin position="188"/>
        <end position="200"/>
    </location>
</feature>
<feature type="compositionally biased region" description="Pro residues" evidence="4">
    <location>
        <begin position="335"/>
        <end position="346"/>
    </location>
</feature>
<keyword id="KW-0175">Coiled coil</keyword>
<keyword id="KW-0963">Cytoplasm</keyword>
<keyword id="KW-0206">Cytoskeleton</keyword>
<keyword id="KW-0493">Microtubule</keyword>
<keyword id="KW-0597">Phosphoprotein</keyword>
<keyword id="KW-1185">Reference proteome</keyword>
<keyword id="KW-0813">Transport</keyword>
<sequence>MENEEIPEFLSPKEEIVYWRELAKRLKQSYQEARDELIEFQEGSRELEAELETQLVQAEQRNRDLLSDNQRLKCEVESLKEKLEHQYAQSYKQVSLLEDELARARSIKDQLHKYVRELEQANDDLERAKRATIVSLEDFEQRLNQAIERNAFLESELDEKESLLVSVQRLKDEARDLRQELAVRERQTNGTRKSAPSSPTLDCDKTDSAVQASLSLPATPVGKVCDNSFTPPKGIPNGFGTTPLTPSARISALNIVGDLLRKVGALESKLAACRNFAKDQASRKSYTPVGLNSSGGGSSALNSSGVKYSHAGHTSFFDKGAVNGYDPPGVLGSRPPSPPGMLPLSV</sequence>
<evidence type="ECO:0000250" key="1"/>
<evidence type="ECO:0000250" key="2">
    <source>
        <dbReference type="UniProtKB" id="Q9ERR1"/>
    </source>
</evidence>
<evidence type="ECO:0000255" key="3"/>
<evidence type="ECO:0000256" key="4">
    <source>
        <dbReference type="SAM" id="MobiDB-lite"/>
    </source>
</evidence>
<evidence type="ECO:0000305" key="5"/>
<gene>
    <name type="primary">ndel1</name>
    <name type="ORF">TEgg108o19.1</name>
</gene>
<dbReference type="EMBL" id="CR926344">
    <property type="protein sequence ID" value="CAJ81964.1"/>
    <property type="molecule type" value="mRNA"/>
</dbReference>
<dbReference type="RefSeq" id="NP_001016201.1">
    <property type="nucleotide sequence ID" value="NM_001016201.2"/>
</dbReference>
<dbReference type="SMR" id="Q28CJ6"/>
<dbReference type="FunCoup" id="Q28CJ6">
    <property type="interactions" value="1345"/>
</dbReference>
<dbReference type="STRING" id="8364.ENSXETP00000026720"/>
<dbReference type="PaxDb" id="8364-ENSXETP00000035670"/>
<dbReference type="ABCD" id="Q28CJ6">
    <property type="antibodies" value="5 sequenced antibodies"/>
</dbReference>
<dbReference type="GeneID" id="548955"/>
<dbReference type="KEGG" id="xtr:548955"/>
<dbReference type="AGR" id="Xenbase:XB-GENE-989304"/>
<dbReference type="CTD" id="81565"/>
<dbReference type="Xenbase" id="XB-GENE-989304">
    <property type="gene designation" value="ndel1"/>
</dbReference>
<dbReference type="eggNOG" id="KOG1853">
    <property type="taxonomic scope" value="Eukaryota"/>
</dbReference>
<dbReference type="InParanoid" id="Q28CJ6"/>
<dbReference type="OrthoDB" id="5877028at2759"/>
<dbReference type="Proteomes" id="UP000008143">
    <property type="component" value="Chromosome 10"/>
</dbReference>
<dbReference type="GO" id="GO:0005813">
    <property type="term" value="C:centrosome"/>
    <property type="evidence" value="ECO:0007669"/>
    <property type="project" value="UniProtKB-SubCell"/>
</dbReference>
<dbReference type="GO" id="GO:0005737">
    <property type="term" value="C:cytoplasm"/>
    <property type="evidence" value="ECO:0007669"/>
    <property type="project" value="UniProtKB-KW"/>
</dbReference>
<dbReference type="GO" id="GO:0005874">
    <property type="term" value="C:microtubule"/>
    <property type="evidence" value="ECO:0007669"/>
    <property type="project" value="UniProtKB-KW"/>
</dbReference>
<dbReference type="GO" id="GO:0005819">
    <property type="term" value="C:spindle"/>
    <property type="evidence" value="ECO:0007669"/>
    <property type="project" value="UniProtKB-SubCell"/>
</dbReference>
<dbReference type="GO" id="GO:0008017">
    <property type="term" value="F:microtubule binding"/>
    <property type="evidence" value="ECO:0007669"/>
    <property type="project" value="InterPro"/>
</dbReference>
<dbReference type="GO" id="GO:0032418">
    <property type="term" value="P:lysosome localization"/>
    <property type="evidence" value="ECO:0000250"/>
    <property type="project" value="UniProtKB"/>
</dbReference>
<dbReference type="GO" id="GO:1900029">
    <property type="term" value="P:positive regulation of ruffle assembly"/>
    <property type="evidence" value="ECO:0000250"/>
    <property type="project" value="UniProtKB"/>
</dbReference>
<dbReference type="Gene3D" id="6.10.250.1080">
    <property type="match status" value="1"/>
</dbReference>
<dbReference type="InterPro" id="IPR033494">
    <property type="entry name" value="NUDE"/>
</dbReference>
<dbReference type="InterPro" id="IPR006964">
    <property type="entry name" value="NUDE_dom"/>
</dbReference>
<dbReference type="PANTHER" id="PTHR10921">
    <property type="entry name" value="NUCLEAR DISTRIBUTION PROTEIN NUDE HOMOLOG 1"/>
    <property type="match status" value="1"/>
</dbReference>
<dbReference type="PANTHER" id="PTHR10921:SF0">
    <property type="entry name" value="NUCLEAR DISTRIBUTION PROTEIN NUDE-LIKE 1"/>
    <property type="match status" value="1"/>
</dbReference>
<dbReference type="Pfam" id="PF04880">
    <property type="entry name" value="NUDE_C"/>
    <property type="match status" value="1"/>
</dbReference>
<accession>Q28CJ6</accession>
<proteinExistence type="evidence at transcript level"/>
<reference key="1">
    <citation type="submission" date="2006-03" db="EMBL/GenBank/DDBJ databases">
        <authorList>
            <consortium name="Sanger Xenopus tropicalis EST/cDNA project"/>
        </authorList>
    </citation>
    <scope>NUCLEOTIDE SEQUENCE [LARGE SCALE MRNA]</scope>
    <source>
        <tissue>Egg</tissue>
    </source>
</reference>
<organism>
    <name type="scientific">Xenopus tropicalis</name>
    <name type="common">Western clawed frog</name>
    <name type="synonym">Silurana tropicalis</name>
    <dbReference type="NCBI Taxonomy" id="8364"/>
    <lineage>
        <taxon>Eukaryota</taxon>
        <taxon>Metazoa</taxon>
        <taxon>Chordata</taxon>
        <taxon>Craniata</taxon>
        <taxon>Vertebrata</taxon>
        <taxon>Euteleostomi</taxon>
        <taxon>Amphibia</taxon>
        <taxon>Batrachia</taxon>
        <taxon>Anura</taxon>
        <taxon>Pipoidea</taxon>
        <taxon>Pipidae</taxon>
        <taxon>Xenopodinae</taxon>
        <taxon>Xenopus</taxon>
        <taxon>Silurana</taxon>
    </lineage>
</organism>
<protein>
    <recommendedName>
        <fullName>Nuclear distribution protein nudE-like 1</fullName>
    </recommendedName>
</protein>
<name>NDEL1_XENTR</name>
<comment type="function">
    <text evidence="1 2">Required for organization of the cellular microtubule array and microtubule anchoring at the centrosome. Positively regulates the activity of the minus-end directed microtubule motor protein dynein. May enhance dynein-mediated microtubule sliding by targeting dynein to the microtubule plus end. Positively regulates lysosome peripheral distribution and ruffled border formation in osteoclasts.</text>
</comment>
<comment type="subcellular location">
    <subcellularLocation>
        <location evidence="1">Cytoplasm</location>
        <location evidence="1">Cytoskeleton</location>
    </subcellularLocation>
    <subcellularLocation>
        <location evidence="1">Cytoplasm</location>
        <location evidence="1">Cytoskeleton</location>
        <location evidence="1">Microtubule organizing center</location>
        <location evidence="1">Centrosome</location>
    </subcellularLocation>
    <subcellularLocation>
        <location evidence="1">Cytoplasm</location>
        <location evidence="1">Cytoskeleton</location>
        <location evidence="1">Spindle</location>
    </subcellularLocation>
    <text evidence="1">Localizes to the interphase centrosome and the mitotic spindle.</text>
</comment>
<comment type="PTM">
    <text evidence="1">Phosphorylated in mitosis.</text>
</comment>
<comment type="similarity">
    <text evidence="5">Belongs to the nudE family.</text>
</comment>